<gene>
    <name type="primary">MIOX4</name>
    <name type="ordered locus">At4g26260</name>
    <name type="ORF">T25K17.70</name>
</gene>
<feature type="chain" id="PRO_0000079156" description="Inositol oxygenase 4">
    <location>
        <begin position="1"/>
        <end position="317"/>
    </location>
</feature>
<feature type="binding site" evidence="1">
    <location>
        <position position="58"/>
    </location>
    <ligand>
        <name>substrate</name>
    </ligand>
</feature>
<feature type="binding site" evidence="1">
    <location>
        <begin position="115"/>
        <end position="117"/>
    </location>
    <ligand>
        <name>substrate</name>
    </ligand>
</feature>
<feature type="binding site" evidence="1">
    <location>
        <position position="128"/>
    </location>
    <ligand>
        <name>Fe cation</name>
        <dbReference type="ChEBI" id="CHEBI:24875"/>
        <label>1</label>
    </ligand>
</feature>
<feature type="binding site" evidence="1">
    <location>
        <position position="153"/>
    </location>
    <ligand>
        <name>Fe cation</name>
        <dbReference type="ChEBI" id="CHEBI:24875"/>
        <label>1</label>
    </ligand>
</feature>
<feature type="binding site" evidence="1">
    <location>
        <position position="154"/>
    </location>
    <ligand>
        <name>Fe cation</name>
        <dbReference type="ChEBI" id="CHEBI:24875"/>
        <label>1</label>
    </ligand>
</feature>
<feature type="binding site" evidence="1">
    <location>
        <position position="154"/>
    </location>
    <ligand>
        <name>Fe cation</name>
        <dbReference type="ChEBI" id="CHEBI:24875"/>
        <label>2</label>
    </ligand>
</feature>
<feature type="binding site" evidence="1">
    <location>
        <position position="157"/>
    </location>
    <ligand>
        <name>substrate</name>
    </ligand>
</feature>
<feature type="binding site" evidence="1">
    <location>
        <begin position="174"/>
        <end position="175"/>
    </location>
    <ligand>
        <name>substrate</name>
    </ligand>
</feature>
<feature type="binding site" evidence="1">
    <location>
        <position position="226"/>
    </location>
    <ligand>
        <name>Fe cation</name>
        <dbReference type="ChEBI" id="CHEBI:24875"/>
        <label>2</label>
    </ligand>
</feature>
<feature type="binding site" evidence="1">
    <location>
        <begin position="252"/>
        <end position="253"/>
    </location>
    <ligand>
        <name>substrate</name>
    </ligand>
</feature>
<feature type="binding site" evidence="1">
    <location>
        <position position="252"/>
    </location>
    <ligand>
        <name>Fe cation</name>
        <dbReference type="ChEBI" id="CHEBI:24875"/>
        <label>2</label>
    </ligand>
</feature>
<feature type="binding site" evidence="1">
    <location>
        <position position="285"/>
    </location>
    <ligand>
        <name>Fe cation</name>
        <dbReference type="ChEBI" id="CHEBI:24875"/>
        <label>1</label>
    </ligand>
</feature>
<feature type="splice variant" id="VSP_041591" description="In isoform 2." evidence="5">
    <original>F</original>
    <variation>FE</variation>
    <location>
        <position position="10"/>
    </location>
</feature>
<feature type="sequence conflict" description="In Ref. 1; AAP59548." evidence="5" ref="1">
    <original>Q</original>
    <variation>R</variation>
    <location>
        <position position="77"/>
    </location>
</feature>
<feature type="sequence conflict" description="In Ref. 1; AAP59548." evidence="5" ref="1">
    <original>K</original>
    <variation>E</variation>
    <location>
        <position position="300"/>
    </location>
</feature>
<name>MIOX4_ARATH</name>
<comment type="function">
    <text evidence="2 7">Catalyzes the oxygenative cleavage of myo-inositol to D-glucuronate. Involved in the biosynthesis of UDP-glucuronic acid (UDP-GlcA), providing nucleotide sugars for cell-wall polymers. May be also involved in plant ascorbate biosynthesis.</text>
</comment>
<comment type="catalytic activity">
    <reaction evidence="6">
        <text>myo-inositol + O2 = D-glucuronate + H2O + H(+)</text>
        <dbReference type="Rhea" id="RHEA:23696"/>
        <dbReference type="ChEBI" id="CHEBI:15377"/>
        <dbReference type="ChEBI" id="CHEBI:15378"/>
        <dbReference type="ChEBI" id="CHEBI:15379"/>
        <dbReference type="ChEBI" id="CHEBI:17268"/>
        <dbReference type="ChEBI" id="CHEBI:58720"/>
        <dbReference type="EC" id="1.13.99.1"/>
    </reaction>
    <physiologicalReaction direction="left-to-right" evidence="6">
        <dbReference type="Rhea" id="RHEA:23697"/>
    </physiologicalReaction>
</comment>
<comment type="cofactor">
    <cofactor evidence="1">
        <name>Fe cation</name>
        <dbReference type="ChEBI" id="CHEBI:24875"/>
    </cofactor>
    <text evidence="1">Binds 2 iron ions per subunit.</text>
</comment>
<comment type="pathway">
    <text>Polyol metabolism; myo-inositol degradation into D-glucuronate; D-glucuronate from myo-inositol: step 1/1.</text>
</comment>
<comment type="subcellular location">
    <subcellularLocation>
        <location evidence="5">Cytoplasm</location>
    </subcellularLocation>
</comment>
<comment type="alternative products">
    <event type="alternative splicing"/>
    <isoform>
        <id>Q8H1S0-1</id>
        <name>1</name>
        <sequence type="displayed"/>
    </isoform>
    <isoform>
        <id>Q8H1S0-2</id>
        <name>2</name>
        <sequence type="described" ref="VSP_041591"/>
    </isoform>
</comment>
<comment type="tissue specificity">
    <text evidence="2 3">Expressed in flowers, leaves, siliques, and to a lesser extent in roots.</text>
</comment>
<comment type="similarity">
    <text evidence="5">Belongs to the myo-inositol oxygenase family.</text>
</comment>
<keyword id="KW-0025">Alternative splicing</keyword>
<keyword id="KW-0060">Ascorbate biosynthesis</keyword>
<keyword id="KW-0963">Cytoplasm</keyword>
<keyword id="KW-0408">Iron</keyword>
<keyword id="KW-0479">Metal-binding</keyword>
<keyword id="KW-0560">Oxidoreductase</keyword>
<keyword id="KW-1185">Reference proteome</keyword>
<organism>
    <name type="scientific">Arabidopsis thaliana</name>
    <name type="common">Mouse-ear cress</name>
    <dbReference type="NCBI Taxonomy" id="3702"/>
    <lineage>
        <taxon>Eukaryota</taxon>
        <taxon>Viridiplantae</taxon>
        <taxon>Streptophyta</taxon>
        <taxon>Embryophyta</taxon>
        <taxon>Tracheophyta</taxon>
        <taxon>Spermatophyta</taxon>
        <taxon>Magnoliopsida</taxon>
        <taxon>eudicotyledons</taxon>
        <taxon>Gunneridae</taxon>
        <taxon>Pentapetalae</taxon>
        <taxon>rosids</taxon>
        <taxon>malvids</taxon>
        <taxon>Brassicales</taxon>
        <taxon>Brassicaceae</taxon>
        <taxon>Camelineae</taxon>
        <taxon>Arabidopsis</taxon>
    </lineage>
</organism>
<dbReference type="EC" id="1.13.99.1" evidence="6"/>
<dbReference type="EMBL" id="AY232552">
    <property type="protein sequence ID" value="AAP59548.1"/>
    <property type="molecule type" value="mRNA"/>
</dbReference>
<dbReference type="EMBL" id="AL049171">
    <property type="protein sequence ID" value="CAB38955.1"/>
    <property type="molecule type" value="Genomic_DNA"/>
</dbReference>
<dbReference type="EMBL" id="AL161564">
    <property type="protein sequence ID" value="CAB79481.1"/>
    <property type="molecule type" value="Genomic_DNA"/>
</dbReference>
<dbReference type="EMBL" id="CP002687">
    <property type="protein sequence ID" value="AEE85176.1"/>
    <property type="molecule type" value="Genomic_DNA"/>
</dbReference>
<dbReference type="EMBL" id="CP002687">
    <property type="protein sequence ID" value="AEE85177.1"/>
    <property type="molecule type" value="Genomic_DNA"/>
</dbReference>
<dbReference type="EMBL" id="AY142501">
    <property type="protein sequence ID" value="AAN13052.1"/>
    <property type="molecule type" value="mRNA"/>
</dbReference>
<dbReference type="PIR" id="T06010">
    <property type="entry name" value="T06010"/>
</dbReference>
<dbReference type="RefSeq" id="NP_001190844.1">
    <molecule id="Q8H1S0-2"/>
    <property type="nucleotide sequence ID" value="NM_001203915.2"/>
</dbReference>
<dbReference type="RefSeq" id="NP_194356.2">
    <molecule id="Q8H1S0-1"/>
    <property type="nucleotide sequence ID" value="NM_118759.5"/>
</dbReference>
<dbReference type="SMR" id="Q8H1S0"/>
<dbReference type="BioGRID" id="14019">
    <property type="interactions" value="1"/>
</dbReference>
<dbReference type="FunCoup" id="Q8H1S0">
    <property type="interactions" value="258"/>
</dbReference>
<dbReference type="STRING" id="3702.Q8H1S0"/>
<dbReference type="PaxDb" id="3702-AT4G26260.2"/>
<dbReference type="ProteomicsDB" id="250706">
    <molecule id="Q8H1S0-1"/>
</dbReference>
<dbReference type="EnsemblPlants" id="AT4G26260.1">
    <molecule id="Q8H1S0-1"/>
    <property type="protein sequence ID" value="AT4G26260.1"/>
    <property type="gene ID" value="AT4G26260"/>
</dbReference>
<dbReference type="EnsemblPlants" id="AT4G26260.2">
    <molecule id="Q8H1S0-2"/>
    <property type="protein sequence ID" value="AT4G26260.2"/>
    <property type="gene ID" value="AT4G26260"/>
</dbReference>
<dbReference type="GeneID" id="828732"/>
<dbReference type="Gramene" id="AT4G26260.1">
    <molecule id="Q8H1S0-1"/>
    <property type="protein sequence ID" value="AT4G26260.1"/>
    <property type="gene ID" value="AT4G26260"/>
</dbReference>
<dbReference type="Gramene" id="AT4G26260.2">
    <molecule id="Q8H1S0-2"/>
    <property type="protein sequence ID" value="AT4G26260.2"/>
    <property type="gene ID" value="AT4G26260"/>
</dbReference>
<dbReference type="KEGG" id="ath:AT4G26260"/>
<dbReference type="Araport" id="AT4G26260"/>
<dbReference type="TAIR" id="AT4G26260">
    <property type="gene designation" value="MIOX4"/>
</dbReference>
<dbReference type="eggNOG" id="KOG1573">
    <property type="taxonomic scope" value="Eukaryota"/>
</dbReference>
<dbReference type="HOGENOM" id="CLU_050259_2_0_1"/>
<dbReference type="InParanoid" id="Q8H1S0"/>
<dbReference type="OMA" id="NTRDLTM"/>
<dbReference type="OrthoDB" id="5151075at2759"/>
<dbReference type="PhylomeDB" id="Q8H1S0"/>
<dbReference type="BioCyc" id="MetaCyc:AT4G26260-MONOMER"/>
<dbReference type="BRENDA" id="1.13.99.1">
    <property type="organism ID" value="399"/>
</dbReference>
<dbReference type="UniPathway" id="UPA00111">
    <property type="reaction ID" value="UER00527"/>
</dbReference>
<dbReference type="PRO" id="PR:Q8H1S0"/>
<dbReference type="Proteomes" id="UP000006548">
    <property type="component" value="Chromosome 4"/>
</dbReference>
<dbReference type="ExpressionAtlas" id="Q8H1S0">
    <property type="expression patterns" value="baseline and differential"/>
</dbReference>
<dbReference type="GO" id="GO:0005737">
    <property type="term" value="C:cytoplasm"/>
    <property type="evidence" value="ECO:0007669"/>
    <property type="project" value="UniProtKB-SubCell"/>
</dbReference>
<dbReference type="GO" id="GO:0050113">
    <property type="term" value="F:inositol oxygenase activity"/>
    <property type="evidence" value="ECO:0000314"/>
    <property type="project" value="TAIR"/>
</dbReference>
<dbReference type="GO" id="GO:0005506">
    <property type="term" value="F:iron ion binding"/>
    <property type="evidence" value="ECO:0007669"/>
    <property type="project" value="InterPro"/>
</dbReference>
<dbReference type="GO" id="GO:0019310">
    <property type="term" value="P:inositol catabolic process"/>
    <property type="evidence" value="ECO:0007669"/>
    <property type="project" value="InterPro"/>
</dbReference>
<dbReference type="GO" id="GO:0019853">
    <property type="term" value="P:L-ascorbic acid biosynthetic process"/>
    <property type="evidence" value="ECO:0000315"/>
    <property type="project" value="TAIR"/>
</dbReference>
<dbReference type="InterPro" id="IPR007828">
    <property type="entry name" value="Inositol_oxygenase"/>
</dbReference>
<dbReference type="PANTHER" id="PTHR12588:SF4">
    <property type="entry name" value="INOSITOL OXYGENASE 4"/>
    <property type="match status" value="1"/>
</dbReference>
<dbReference type="PANTHER" id="PTHR12588">
    <property type="entry name" value="MYOINOSITOL OXYGENASE"/>
    <property type="match status" value="1"/>
</dbReference>
<dbReference type="Pfam" id="PF05153">
    <property type="entry name" value="MIOX"/>
    <property type="match status" value="1"/>
</dbReference>
<dbReference type="SUPFAM" id="SSF109604">
    <property type="entry name" value="HD-domain/PDEase-like"/>
    <property type="match status" value="1"/>
</dbReference>
<accession>Q8H1S0</accession>
<accession>Q6XGZ9</accession>
<accession>Q9STQ8</accession>
<sequence length="317" mass="36904">MTISVEKPIFEEVSAFEKSGDNIGELKLDGGFSMPKMDTNDDEAFLAPEMNAFGRQFRDYDVESERQKGVEEFYRLQHINQTVDFVKKMRAEYGKLDKMVMSIWECCELLNEVVDESDPDLDEPQIQHLLQSAEAIRKDYPNEDWLHLTALIHDLGKVITLPQFGGLPQWAVVGDTFPVGCAFDESNVHHKYFVENPDFHNETYNTKNGIYSEGCGLNNVMMSWGHDDYMYLVAKENGSTLPSAGQFIIRYHSFYPLHTAGEYTHLMNEEDKENLKWLHVFNKYDLYSKSKVHVDVEKVKPYYMSLIKKYFPENLRW</sequence>
<protein>
    <recommendedName>
        <fullName>Inositol oxygenase 4</fullName>
        <ecNumber evidence="6">1.13.99.1</ecNumber>
    </recommendedName>
    <alternativeName>
        <fullName evidence="4">Myo-inositol oxygenase 4</fullName>
        <shortName evidence="4">AtMIOX4</shortName>
        <shortName>MI oxygenase 4</shortName>
    </alternativeName>
</protein>
<reference key="1">
    <citation type="journal article" date="2004" name="Plant Physiol.">
        <title>Myo-inositol oxygenase offers a possible entry point into plant ascorbate biosynthesis.</title>
        <authorList>
            <person name="Lorence A."/>
            <person name="Chevone B.I."/>
            <person name="Mendes P."/>
            <person name="Nessler C.L."/>
        </authorList>
    </citation>
    <scope>NUCLEOTIDE SEQUENCE [MRNA] (ISOFORM 1)</scope>
    <scope>FUNCTION</scope>
    <scope>CATALYTIC ACTIVITY</scope>
    <scope>TISSUE SPECIFICITY</scope>
</reference>
<reference key="2">
    <citation type="journal article" date="2005" name="Planta">
        <title>The inositol oxygenase gene family of Arabidopsis is involved in the biosynthesis of nucleotide sugar precursors for cell-wall matrix polysaccharides.</title>
        <authorList>
            <person name="Kanter U."/>
            <person name="Usadel B."/>
            <person name="Guerineau F."/>
            <person name="Li Y."/>
            <person name="Pauly M."/>
            <person name="Tenhaken R."/>
        </authorList>
    </citation>
    <scope>NUCLEOTIDE SEQUENCE [MRNA] (ISOFORM 1)</scope>
    <scope>TISSUE SPECIFICITY</scope>
    <scope>FUNCTION</scope>
</reference>
<reference key="3">
    <citation type="journal article" date="1999" name="Nature">
        <title>Sequence and analysis of chromosome 4 of the plant Arabidopsis thaliana.</title>
        <authorList>
            <person name="Mayer K.F.X."/>
            <person name="Schueller C."/>
            <person name="Wambutt R."/>
            <person name="Murphy G."/>
            <person name="Volckaert G."/>
            <person name="Pohl T."/>
            <person name="Duesterhoeft A."/>
            <person name="Stiekema W."/>
            <person name="Entian K.-D."/>
            <person name="Terryn N."/>
            <person name="Harris B."/>
            <person name="Ansorge W."/>
            <person name="Brandt P."/>
            <person name="Grivell L.A."/>
            <person name="Rieger M."/>
            <person name="Weichselgartner M."/>
            <person name="de Simone V."/>
            <person name="Obermaier B."/>
            <person name="Mache R."/>
            <person name="Mueller M."/>
            <person name="Kreis M."/>
            <person name="Delseny M."/>
            <person name="Puigdomenech P."/>
            <person name="Watson M."/>
            <person name="Schmidtheini T."/>
            <person name="Reichert B."/>
            <person name="Portetelle D."/>
            <person name="Perez-Alonso M."/>
            <person name="Boutry M."/>
            <person name="Bancroft I."/>
            <person name="Vos P."/>
            <person name="Hoheisel J."/>
            <person name="Zimmermann W."/>
            <person name="Wedler H."/>
            <person name="Ridley P."/>
            <person name="Langham S.-A."/>
            <person name="McCullagh B."/>
            <person name="Bilham L."/>
            <person name="Robben J."/>
            <person name="van der Schueren J."/>
            <person name="Grymonprez B."/>
            <person name="Chuang Y.-J."/>
            <person name="Vandenbussche F."/>
            <person name="Braeken M."/>
            <person name="Weltjens I."/>
            <person name="Voet M."/>
            <person name="Bastiaens I."/>
            <person name="Aert R."/>
            <person name="Defoor E."/>
            <person name="Weitzenegger T."/>
            <person name="Bothe G."/>
            <person name="Ramsperger U."/>
            <person name="Hilbert H."/>
            <person name="Braun M."/>
            <person name="Holzer E."/>
            <person name="Brandt A."/>
            <person name="Peters S."/>
            <person name="van Staveren M."/>
            <person name="Dirkse W."/>
            <person name="Mooijman P."/>
            <person name="Klein Lankhorst R."/>
            <person name="Rose M."/>
            <person name="Hauf J."/>
            <person name="Koetter P."/>
            <person name="Berneiser S."/>
            <person name="Hempel S."/>
            <person name="Feldpausch M."/>
            <person name="Lamberth S."/>
            <person name="Van den Daele H."/>
            <person name="De Keyser A."/>
            <person name="Buysshaert C."/>
            <person name="Gielen J."/>
            <person name="Villarroel R."/>
            <person name="De Clercq R."/>
            <person name="van Montagu M."/>
            <person name="Rogers J."/>
            <person name="Cronin A."/>
            <person name="Quail M.A."/>
            <person name="Bray-Allen S."/>
            <person name="Clark L."/>
            <person name="Doggett J."/>
            <person name="Hall S."/>
            <person name="Kay M."/>
            <person name="Lennard N."/>
            <person name="McLay K."/>
            <person name="Mayes R."/>
            <person name="Pettett A."/>
            <person name="Rajandream M.A."/>
            <person name="Lyne M."/>
            <person name="Benes V."/>
            <person name="Rechmann S."/>
            <person name="Borkova D."/>
            <person name="Bloecker H."/>
            <person name="Scharfe M."/>
            <person name="Grimm M."/>
            <person name="Loehnert T.-H."/>
            <person name="Dose S."/>
            <person name="de Haan M."/>
            <person name="Maarse A.C."/>
            <person name="Schaefer M."/>
            <person name="Mueller-Auer S."/>
            <person name="Gabel C."/>
            <person name="Fuchs M."/>
            <person name="Fartmann B."/>
            <person name="Granderath K."/>
            <person name="Dauner D."/>
            <person name="Herzl A."/>
            <person name="Neumann S."/>
            <person name="Argiriou A."/>
            <person name="Vitale D."/>
            <person name="Liguori R."/>
            <person name="Piravandi E."/>
            <person name="Massenet O."/>
            <person name="Quigley F."/>
            <person name="Clabauld G."/>
            <person name="Muendlein A."/>
            <person name="Felber R."/>
            <person name="Schnabl S."/>
            <person name="Hiller R."/>
            <person name="Schmidt W."/>
            <person name="Lecharny A."/>
            <person name="Aubourg S."/>
            <person name="Chefdor F."/>
            <person name="Cooke R."/>
            <person name="Berger C."/>
            <person name="Monfort A."/>
            <person name="Casacuberta E."/>
            <person name="Gibbons T."/>
            <person name="Weber N."/>
            <person name="Vandenbol M."/>
            <person name="Bargues M."/>
            <person name="Terol J."/>
            <person name="Torres A."/>
            <person name="Perez-Perez A."/>
            <person name="Purnelle B."/>
            <person name="Bent E."/>
            <person name="Johnson S."/>
            <person name="Tacon D."/>
            <person name="Jesse T."/>
            <person name="Heijnen L."/>
            <person name="Schwarz S."/>
            <person name="Scholler P."/>
            <person name="Heber S."/>
            <person name="Francs P."/>
            <person name="Bielke C."/>
            <person name="Frishman D."/>
            <person name="Haase D."/>
            <person name="Lemcke K."/>
            <person name="Mewes H.-W."/>
            <person name="Stocker S."/>
            <person name="Zaccaria P."/>
            <person name="Bevan M."/>
            <person name="Wilson R.K."/>
            <person name="de la Bastide M."/>
            <person name="Habermann K."/>
            <person name="Parnell L."/>
            <person name="Dedhia N."/>
            <person name="Gnoj L."/>
            <person name="Schutz K."/>
            <person name="Huang E."/>
            <person name="Spiegel L."/>
            <person name="Sekhon M."/>
            <person name="Murray J."/>
            <person name="Sheet P."/>
            <person name="Cordes M."/>
            <person name="Abu-Threideh J."/>
            <person name="Stoneking T."/>
            <person name="Kalicki J."/>
            <person name="Graves T."/>
            <person name="Harmon G."/>
            <person name="Edwards J."/>
            <person name="Latreille P."/>
            <person name="Courtney L."/>
            <person name="Cloud J."/>
            <person name="Abbott A."/>
            <person name="Scott K."/>
            <person name="Johnson D."/>
            <person name="Minx P."/>
            <person name="Bentley D."/>
            <person name="Fulton B."/>
            <person name="Miller N."/>
            <person name="Greco T."/>
            <person name="Kemp K."/>
            <person name="Kramer J."/>
            <person name="Fulton L."/>
            <person name="Mardis E."/>
            <person name="Dante M."/>
            <person name="Pepin K."/>
            <person name="Hillier L.W."/>
            <person name="Nelson J."/>
            <person name="Spieth J."/>
            <person name="Ryan E."/>
            <person name="Andrews S."/>
            <person name="Geisel C."/>
            <person name="Layman D."/>
            <person name="Du H."/>
            <person name="Ali J."/>
            <person name="Berghoff A."/>
            <person name="Jones K."/>
            <person name="Drone K."/>
            <person name="Cotton M."/>
            <person name="Joshu C."/>
            <person name="Antonoiu B."/>
            <person name="Zidanic M."/>
            <person name="Strong C."/>
            <person name="Sun H."/>
            <person name="Lamar B."/>
            <person name="Yordan C."/>
            <person name="Ma P."/>
            <person name="Zhong J."/>
            <person name="Preston R."/>
            <person name="Vil D."/>
            <person name="Shekher M."/>
            <person name="Matero A."/>
            <person name="Shah R."/>
            <person name="Swaby I.K."/>
            <person name="O'Shaughnessy A."/>
            <person name="Rodriguez M."/>
            <person name="Hoffman J."/>
            <person name="Till S."/>
            <person name="Granat S."/>
            <person name="Shohdy N."/>
            <person name="Hasegawa A."/>
            <person name="Hameed A."/>
            <person name="Lodhi M."/>
            <person name="Johnson A."/>
            <person name="Chen E."/>
            <person name="Marra M.A."/>
            <person name="Martienssen R."/>
            <person name="McCombie W.R."/>
        </authorList>
    </citation>
    <scope>NUCLEOTIDE SEQUENCE [LARGE SCALE GENOMIC DNA]</scope>
    <source>
        <strain>cv. Columbia</strain>
    </source>
</reference>
<reference key="4">
    <citation type="journal article" date="2017" name="Plant J.">
        <title>Araport11: a complete reannotation of the Arabidopsis thaliana reference genome.</title>
        <authorList>
            <person name="Cheng C.Y."/>
            <person name="Krishnakumar V."/>
            <person name="Chan A.P."/>
            <person name="Thibaud-Nissen F."/>
            <person name="Schobel S."/>
            <person name="Town C.D."/>
        </authorList>
    </citation>
    <scope>GENOME REANNOTATION</scope>
    <source>
        <strain>cv. Columbia</strain>
    </source>
</reference>
<reference key="5">
    <citation type="journal article" date="2003" name="Science">
        <title>Empirical analysis of transcriptional activity in the Arabidopsis genome.</title>
        <authorList>
            <person name="Yamada K."/>
            <person name="Lim J."/>
            <person name="Dale J.M."/>
            <person name="Chen H."/>
            <person name="Shinn P."/>
            <person name="Palm C.J."/>
            <person name="Southwick A.M."/>
            <person name="Wu H.C."/>
            <person name="Kim C.J."/>
            <person name="Nguyen M."/>
            <person name="Pham P.K."/>
            <person name="Cheuk R.F."/>
            <person name="Karlin-Newmann G."/>
            <person name="Liu S.X."/>
            <person name="Lam B."/>
            <person name="Sakano H."/>
            <person name="Wu T."/>
            <person name="Yu G."/>
            <person name="Miranda M."/>
            <person name="Quach H.L."/>
            <person name="Tripp M."/>
            <person name="Chang C.H."/>
            <person name="Lee J.M."/>
            <person name="Toriumi M.J."/>
            <person name="Chan M.M."/>
            <person name="Tang C.C."/>
            <person name="Onodera C.S."/>
            <person name="Deng J.M."/>
            <person name="Akiyama K."/>
            <person name="Ansari Y."/>
            <person name="Arakawa T."/>
            <person name="Banh J."/>
            <person name="Banno F."/>
            <person name="Bowser L."/>
            <person name="Brooks S.Y."/>
            <person name="Carninci P."/>
            <person name="Chao Q."/>
            <person name="Choy N."/>
            <person name="Enju A."/>
            <person name="Goldsmith A.D."/>
            <person name="Gurjal M."/>
            <person name="Hansen N.F."/>
            <person name="Hayashizaki Y."/>
            <person name="Johnson-Hopson C."/>
            <person name="Hsuan V.W."/>
            <person name="Iida K."/>
            <person name="Karnes M."/>
            <person name="Khan S."/>
            <person name="Koesema E."/>
            <person name="Ishida J."/>
            <person name="Jiang P.X."/>
            <person name="Jones T."/>
            <person name="Kawai J."/>
            <person name="Kamiya A."/>
            <person name="Meyers C."/>
            <person name="Nakajima M."/>
            <person name="Narusaka M."/>
            <person name="Seki M."/>
            <person name="Sakurai T."/>
            <person name="Satou M."/>
            <person name="Tamse R."/>
            <person name="Vaysberg M."/>
            <person name="Wallender E.K."/>
            <person name="Wong C."/>
            <person name="Yamamura Y."/>
            <person name="Yuan S."/>
            <person name="Shinozaki K."/>
            <person name="Davis R.W."/>
            <person name="Theologis A."/>
            <person name="Ecker J.R."/>
        </authorList>
    </citation>
    <scope>NUCLEOTIDE SEQUENCE [LARGE SCALE MRNA] (ISOFORM 1)</scope>
    <source>
        <strain>cv. Columbia</strain>
    </source>
</reference>
<evidence type="ECO:0000250" key="1"/>
<evidence type="ECO:0000269" key="2">
    <source>
    </source>
</evidence>
<evidence type="ECO:0000269" key="3">
    <source>
    </source>
</evidence>
<evidence type="ECO:0000303" key="4">
    <source>
    </source>
</evidence>
<evidence type="ECO:0000305" key="5"/>
<evidence type="ECO:0000305" key="6">
    <source>
    </source>
</evidence>
<evidence type="ECO:0000305" key="7">
    <source>
    </source>
</evidence>
<proteinExistence type="evidence at protein level"/>